<gene>
    <name evidence="1" type="primary">uvrB</name>
    <name type="ordered locus">BLi03759</name>
    <name type="ordered locus">BL03394</name>
</gene>
<feature type="chain" id="PRO_0000227284" description="UvrABC system protein B">
    <location>
        <begin position="1"/>
        <end position="661"/>
    </location>
</feature>
<feature type="domain" description="Helicase ATP-binding" evidence="1">
    <location>
        <begin position="26"/>
        <end position="413"/>
    </location>
</feature>
<feature type="domain" description="Helicase C-terminal" evidence="1">
    <location>
        <begin position="430"/>
        <end position="596"/>
    </location>
</feature>
<feature type="domain" description="UVR" evidence="1">
    <location>
        <begin position="625"/>
        <end position="660"/>
    </location>
</feature>
<feature type="short sequence motif" description="Beta-hairpin">
    <location>
        <begin position="92"/>
        <end position="115"/>
    </location>
</feature>
<feature type="binding site" evidence="1">
    <location>
        <begin position="39"/>
        <end position="46"/>
    </location>
    <ligand>
        <name>ATP</name>
        <dbReference type="ChEBI" id="CHEBI:30616"/>
    </ligand>
</feature>
<name>UVRB_BACLD</name>
<reference key="1">
    <citation type="journal article" date="2004" name="J. Mol. Microbiol. Biotechnol.">
        <title>The complete genome sequence of Bacillus licheniformis DSM13, an organism with great industrial potential.</title>
        <authorList>
            <person name="Veith B."/>
            <person name="Herzberg C."/>
            <person name="Steckel S."/>
            <person name="Feesche J."/>
            <person name="Maurer K.H."/>
            <person name="Ehrenreich P."/>
            <person name="Baeumer S."/>
            <person name="Henne A."/>
            <person name="Liesegang H."/>
            <person name="Merkl R."/>
            <person name="Ehrenreich A."/>
            <person name="Gottschalk G."/>
        </authorList>
    </citation>
    <scope>NUCLEOTIDE SEQUENCE [LARGE SCALE GENOMIC DNA]</scope>
    <source>
        <strain>ATCC 14580 / DSM 13 / JCM 2505 / CCUG 7422 / NBRC 12200 / NCIMB 9375 / NCTC 10341 / NRRL NRS-1264 / Gibson 46</strain>
    </source>
</reference>
<reference key="2">
    <citation type="journal article" date="2004" name="Genome Biol.">
        <title>Complete genome sequence of the industrial bacterium Bacillus licheniformis and comparisons with closely related Bacillus species.</title>
        <authorList>
            <person name="Rey M.W."/>
            <person name="Ramaiya P."/>
            <person name="Nelson B.A."/>
            <person name="Brody-Karpin S.D."/>
            <person name="Zaretsky E.J."/>
            <person name="Tang M."/>
            <person name="Lopez de Leon A."/>
            <person name="Xiang H."/>
            <person name="Gusti V."/>
            <person name="Clausen I.G."/>
            <person name="Olsen P.B."/>
            <person name="Rasmussen M.D."/>
            <person name="Andersen J.T."/>
            <person name="Joergensen P.L."/>
            <person name="Larsen T.S."/>
            <person name="Sorokin A."/>
            <person name="Bolotin A."/>
            <person name="Lapidus A."/>
            <person name="Galleron N."/>
            <person name="Ehrlich S.D."/>
            <person name="Berka R.M."/>
        </authorList>
    </citation>
    <scope>NUCLEOTIDE SEQUENCE [LARGE SCALE GENOMIC DNA]</scope>
    <source>
        <strain>ATCC 14580 / DSM 13 / JCM 2505 / CCUG 7422 / NBRC 12200 / NCIMB 9375 / NCTC 10341 / NRRL NRS-1264 / Gibson 46</strain>
    </source>
</reference>
<accession>Q65ED8</accession>
<accession>Q62PV7</accession>
<comment type="function">
    <text evidence="1">The UvrABC repair system catalyzes the recognition and processing of DNA lesions. A damage recognition complex composed of 2 UvrA and 2 UvrB subunits scans DNA for abnormalities. Upon binding of the UvrA(2)B(2) complex to a putative damaged site, the DNA wraps around one UvrB monomer. DNA wrap is dependent on ATP binding by UvrB and probably causes local melting of the DNA helix, facilitating insertion of UvrB beta-hairpin between the DNA strands. Then UvrB probes one DNA strand for the presence of a lesion. If a lesion is found the UvrA subunits dissociate and the UvrB-DNA preincision complex is formed. This complex is subsequently bound by UvrC and the second UvrB is released. If no lesion is found, the DNA wraps around the other UvrB subunit that will check the other stand for damage.</text>
</comment>
<comment type="subunit">
    <text evidence="1">Forms a heterotetramer with UvrA during the search for lesions. Interacts with UvrC in an incision complex.</text>
</comment>
<comment type="subcellular location">
    <subcellularLocation>
        <location evidence="1">Cytoplasm</location>
    </subcellularLocation>
</comment>
<comment type="domain">
    <text evidence="1">The beta-hairpin motif is involved in DNA binding.</text>
</comment>
<comment type="similarity">
    <text evidence="1">Belongs to the UvrB family.</text>
</comment>
<dbReference type="EMBL" id="AE017333">
    <property type="protein sequence ID" value="AAU42576.1"/>
    <property type="molecule type" value="Genomic_DNA"/>
</dbReference>
<dbReference type="EMBL" id="CP000002">
    <property type="protein sequence ID" value="AAU25204.1"/>
    <property type="molecule type" value="Genomic_DNA"/>
</dbReference>
<dbReference type="RefSeq" id="WP_003185651.1">
    <property type="nucleotide sequence ID" value="NC_006322.1"/>
</dbReference>
<dbReference type="SMR" id="Q65ED8"/>
<dbReference type="STRING" id="279010.BL03394"/>
<dbReference type="GeneID" id="92859665"/>
<dbReference type="KEGG" id="bld:BLi03759"/>
<dbReference type="KEGG" id="bli:BL03394"/>
<dbReference type="eggNOG" id="COG0556">
    <property type="taxonomic scope" value="Bacteria"/>
</dbReference>
<dbReference type="HOGENOM" id="CLU_009621_2_1_9"/>
<dbReference type="Proteomes" id="UP000000606">
    <property type="component" value="Chromosome"/>
</dbReference>
<dbReference type="GO" id="GO:0005737">
    <property type="term" value="C:cytoplasm"/>
    <property type="evidence" value="ECO:0007669"/>
    <property type="project" value="UniProtKB-SubCell"/>
</dbReference>
<dbReference type="GO" id="GO:0009380">
    <property type="term" value="C:excinuclease repair complex"/>
    <property type="evidence" value="ECO:0007669"/>
    <property type="project" value="InterPro"/>
</dbReference>
<dbReference type="GO" id="GO:0005524">
    <property type="term" value="F:ATP binding"/>
    <property type="evidence" value="ECO:0007669"/>
    <property type="project" value="UniProtKB-UniRule"/>
</dbReference>
<dbReference type="GO" id="GO:0016887">
    <property type="term" value="F:ATP hydrolysis activity"/>
    <property type="evidence" value="ECO:0007669"/>
    <property type="project" value="InterPro"/>
</dbReference>
<dbReference type="GO" id="GO:0003677">
    <property type="term" value="F:DNA binding"/>
    <property type="evidence" value="ECO:0007669"/>
    <property type="project" value="UniProtKB-UniRule"/>
</dbReference>
<dbReference type="GO" id="GO:0009381">
    <property type="term" value="F:excinuclease ABC activity"/>
    <property type="evidence" value="ECO:0007669"/>
    <property type="project" value="UniProtKB-UniRule"/>
</dbReference>
<dbReference type="GO" id="GO:0006289">
    <property type="term" value="P:nucleotide-excision repair"/>
    <property type="evidence" value="ECO:0007669"/>
    <property type="project" value="UniProtKB-UniRule"/>
</dbReference>
<dbReference type="GO" id="GO:0009432">
    <property type="term" value="P:SOS response"/>
    <property type="evidence" value="ECO:0007669"/>
    <property type="project" value="UniProtKB-UniRule"/>
</dbReference>
<dbReference type="CDD" id="cd17916">
    <property type="entry name" value="DEXHc_UvrB"/>
    <property type="match status" value="1"/>
</dbReference>
<dbReference type="CDD" id="cd18790">
    <property type="entry name" value="SF2_C_UvrB"/>
    <property type="match status" value="1"/>
</dbReference>
<dbReference type="Gene3D" id="3.40.50.300">
    <property type="entry name" value="P-loop containing nucleotide triphosphate hydrolases"/>
    <property type="match status" value="3"/>
</dbReference>
<dbReference type="Gene3D" id="4.10.860.10">
    <property type="entry name" value="UVR domain"/>
    <property type="match status" value="1"/>
</dbReference>
<dbReference type="HAMAP" id="MF_00204">
    <property type="entry name" value="UvrB"/>
    <property type="match status" value="1"/>
</dbReference>
<dbReference type="InterPro" id="IPR006935">
    <property type="entry name" value="Helicase/UvrB_N"/>
</dbReference>
<dbReference type="InterPro" id="IPR014001">
    <property type="entry name" value="Helicase_ATP-bd"/>
</dbReference>
<dbReference type="InterPro" id="IPR001650">
    <property type="entry name" value="Helicase_C-like"/>
</dbReference>
<dbReference type="InterPro" id="IPR027417">
    <property type="entry name" value="P-loop_NTPase"/>
</dbReference>
<dbReference type="InterPro" id="IPR001943">
    <property type="entry name" value="UVR_dom"/>
</dbReference>
<dbReference type="InterPro" id="IPR036876">
    <property type="entry name" value="UVR_dom_sf"/>
</dbReference>
<dbReference type="InterPro" id="IPR004807">
    <property type="entry name" value="UvrB"/>
</dbReference>
<dbReference type="InterPro" id="IPR041471">
    <property type="entry name" value="UvrB_inter"/>
</dbReference>
<dbReference type="InterPro" id="IPR024759">
    <property type="entry name" value="UvrB_YAD/RRR_dom"/>
</dbReference>
<dbReference type="NCBIfam" id="NF003673">
    <property type="entry name" value="PRK05298.1"/>
    <property type="match status" value="1"/>
</dbReference>
<dbReference type="NCBIfam" id="TIGR00631">
    <property type="entry name" value="uvrb"/>
    <property type="match status" value="1"/>
</dbReference>
<dbReference type="PANTHER" id="PTHR24029">
    <property type="entry name" value="UVRABC SYSTEM PROTEIN B"/>
    <property type="match status" value="1"/>
</dbReference>
<dbReference type="PANTHER" id="PTHR24029:SF0">
    <property type="entry name" value="UVRABC SYSTEM PROTEIN B"/>
    <property type="match status" value="1"/>
</dbReference>
<dbReference type="Pfam" id="PF00271">
    <property type="entry name" value="Helicase_C"/>
    <property type="match status" value="1"/>
</dbReference>
<dbReference type="Pfam" id="PF04851">
    <property type="entry name" value="ResIII"/>
    <property type="match status" value="1"/>
</dbReference>
<dbReference type="Pfam" id="PF02151">
    <property type="entry name" value="UVR"/>
    <property type="match status" value="1"/>
</dbReference>
<dbReference type="Pfam" id="PF12344">
    <property type="entry name" value="UvrB"/>
    <property type="match status" value="1"/>
</dbReference>
<dbReference type="Pfam" id="PF17757">
    <property type="entry name" value="UvrB_inter"/>
    <property type="match status" value="1"/>
</dbReference>
<dbReference type="SMART" id="SM00487">
    <property type="entry name" value="DEXDc"/>
    <property type="match status" value="1"/>
</dbReference>
<dbReference type="SMART" id="SM00490">
    <property type="entry name" value="HELICc"/>
    <property type="match status" value="1"/>
</dbReference>
<dbReference type="SUPFAM" id="SSF46600">
    <property type="entry name" value="C-terminal UvrC-binding domain of UvrB"/>
    <property type="match status" value="1"/>
</dbReference>
<dbReference type="SUPFAM" id="SSF52540">
    <property type="entry name" value="P-loop containing nucleoside triphosphate hydrolases"/>
    <property type="match status" value="2"/>
</dbReference>
<dbReference type="PROSITE" id="PS51192">
    <property type="entry name" value="HELICASE_ATP_BIND_1"/>
    <property type="match status" value="1"/>
</dbReference>
<dbReference type="PROSITE" id="PS51194">
    <property type="entry name" value="HELICASE_CTER"/>
    <property type="match status" value="1"/>
</dbReference>
<dbReference type="PROSITE" id="PS50151">
    <property type="entry name" value="UVR"/>
    <property type="match status" value="1"/>
</dbReference>
<keyword id="KW-0067">ATP-binding</keyword>
<keyword id="KW-0963">Cytoplasm</keyword>
<keyword id="KW-0227">DNA damage</keyword>
<keyword id="KW-0228">DNA excision</keyword>
<keyword id="KW-0234">DNA repair</keyword>
<keyword id="KW-0267">Excision nuclease</keyword>
<keyword id="KW-0547">Nucleotide-binding</keyword>
<keyword id="KW-1185">Reference proteome</keyword>
<keyword id="KW-0742">SOS response</keyword>
<protein>
    <recommendedName>
        <fullName evidence="1">UvrABC system protein B</fullName>
        <shortName evidence="1">Protein UvrB</shortName>
    </recommendedName>
    <alternativeName>
        <fullName evidence="1">Excinuclease ABC subunit B</fullName>
    </alternativeName>
</protein>
<proteinExistence type="inferred from homology"/>
<sequence>MKDRFELVSNYQPQGDQPKAIDQLVKGINEGRKHQTLLGATGTGKTFTMSNVIKEVNKPTLVIAHNKTLAGQLYSEFKEFFPNNAVEYFVSYYDYYQPEAYVPQTDTFIEKDASINDEIDKLRHSATSALFERKDVIIVASVSCIYGLGSPEEYREMVLSLRTEMEIERNELLRKLVDIQYARNDIDFQRGTFRVRGDVVEIFPASRDEHCVRVEFFGDEIERIREVDALTGEILGEREHVAIFPASHFVTREEKMKKAIINIEEELEERLKALREEGKLLEAQRLEQRTRYDLEMMREMGFCSGIENYSRHLTLRPAGSTPYTLLDYFPDDFLMVIDESHVTIPQIRGMYNGDQARKQVLVDHGFRLPSALDNRPLRFEEFEKHIHNIVYVSATPGPYELEHTPEMVEQIIRPTGLLDPIIEVRPIEGQIDDLIGEIQQRIERNERVLVTTLTKKMSEDLTDYLKEIGIKVTYLHSEIKTLERIEIIRDLRLGKHDVLVGINLLREGLDIPEVSLVAILDADKEGFLRSERSLIQTIGRAARNAEGRVIMYADKITNSMEIAINETKRRREQQEAYNEKHGITPKTINKKIRDVIRATHAAEDQEEYQVKEEPKLSKMTKKEREKVIAQMESDMKEAAKALDFERAAELRDLLLELKSEG</sequence>
<evidence type="ECO:0000255" key="1">
    <source>
        <dbReference type="HAMAP-Rule" id="MF_00204"/>
    </source>
</evidence>
<organism>
    <name type="scientific">Bacillus licheniformis (strain ATCC 14580 / DSM 13 / JCM 2505 / CCUG 7422 / NBRC 12200 / NCIMB 9375 / NCTC 10341 / NRRL NRS-1264 / Gibson 46)</name>
    <dbReference type="NCBI Taxonomy" id="279010"/>
    <lineage>
        <taxon>Bacteria</taxon>
        <taxon>Bacillati</taxon>
        <taxon>Bacillota</taxon>
        <taxon>Bacilli</taxon>
        <taxon>Bacillales</taxon>
        <taxon>Bacillaceae</taxon>
        <taxon>Bacillus</taxon>
    </lineage>
</organism>